<keyword id="KW-0067">ATP-binding</keyword>
<keyword id="KW-0963">Cytoplasm</keyword>
<keyword id="KW-0418">Kinase</keyword>
<keyword id="KW-0547">Nucleotide-binding</keyword>
<keyword id="KW-0808">Transferase</keyword>
<comment type="catalytic activity">
    <reaction evidence="1">
        <text>CMP + ATP = CDP + ADP</text>
        <dbReference type="Rhea" id="RHEA:11600"/>
        <dbReference type="ChEBI" id="CHEBI:30616"/>
        <dbReference type="ChEBI" id="CHEBI:58069"/>
        <dbReference type="ChEBI" id="CHEBI:60377"/>
        <dbReference type="ChEBI" id="CHEBI:456216"/>
        <dbReference type="EC" id="2.7.4.25"/>
    </reaction>
</comment>
<comment type="catalytic activity">
    <reaction evidence="1">
        <text>dCMP + ATP = dCDP + ADP</text>
        <dbReference type="Rhea" id="RHEA:25094"/>
        <dbReference type="ChEBI" id="CHEBI:30616"/>
        <dbReference type="ChEBI" id="CHEBI:57566"/>
        <dbReference type="ChEBI" id="CHEBI:58593"/>
        <dbReference type="ChEBI" id="CHEBI:456216"/>
        <dbReference type="EC" id="2.7.4.25"/>
    </reaction>
</comment>
<comment type="subcellular location">
    <subcellularLocation>
        <location evidence="1">Cytoplasm</location>
    </subcellularLocation>
</comment>
<comment type="similarity">
    <text evidence="1">Belongs to the cytidylate kinase family. Type 1 subfamily.</text>
</comment>
<name>KCY_STAA9</name>
<dbReference type="EC" id="2.7.4.25" evidence="1"/>
<dbReference type="EMBL" id="CP000703">
    <property type="protein sequence ID" value="ABQ49328.1"/>
    <property type="molecule type" value="Genomic_DNA"/>
</dbReference>
<dbReference type="RefSeq" id="WP_000644391.1">
    <property type="nucleotide sequence ID" value="NC_009487.1"/>
</dbReference>
<dbReference type="SMR" id="A5IT05"/>
<dbReference type="KEGG" id="saj:SaurJH9_1534"/>
<dbReference type="HOGENOM" id="CLU_079959_0_2_9"/>
<dbReference type="GO" id="GO:0005829">
    <property type="term" value="C:cytosol"/>
    <property type="evidence" value="ECO:0007669"/>
    <property type="project" value="TreeGrafter"/>
</dbReference>
<dbReference type="GO" id="GO:0005524">
    <property type="term" value="F:ATP binding"/>
    <property type="evidence" value="ECO:0007669"/>
    <property type="project" value="UniProtKB-UniRule"/>
</dbReference>
<dbReference type="GO" id="GO:0036430">
    <property type="term" value="F:CMP kinase activity"/>
    <property type="evidence" value="ECO:0007669"/>
    <property type="project" value="RHEA"/>
</dbReference>
<dbReference type="GO" id="GO:0036431">
    <property type="term" value="F:dCMP kinase activity"/>
    <property type="evidence" value="ECO:0007669"/>
    <property type="project" value="RHEA"/>
</dbReference>
<dbReference type="GO" id="GO:0015949">
    <property type="term" value="P:nucleobase-containing small molecule interconversion"/>
    <property type="evidence" value="ECO:0007669"/>
    <property type="project" value="TreeGrafter"/>
</dbReference>
<dbReference type="GO" id="GO:0006220">
    <property type="term" value="P:pyrimidine nucleotide metabolic process"/>
    <property type="evidence" value="ECO:0007669"/>
    <property type="project" value="UniProtKB-UniRule"/>
</dbReference>
<dbReference type="CDD" id="cd02020">
    <property type="entry name" value="CMPK"/>
    <property type="match status" value="1"/>
</dbReference>
<dbReference type="Gene3D" id="3.40.50.300">
    <property type="entry name" value="P-loop containing nucleotide triphosphate hydrolases"/>
    <property type="match status" value="1"/>
</dbReference>
<dbReference type="HAMAP" id="MF_00238">
    <property type="entry name" value="Cytidyl_kinase_type1"/>
    <property type="match status" value="1"/>
</dbReference>
<dbReference type="InterPro" id="IPR003136">
    <property type="entry name" value="Cytidylate_kin"/>
</dbReference>
<dbReference type="InterPro" id="IPR011994">
    <property type="entry name" value="Cytidylate_kinase_dom"/>
</dbReference>
<dbReference type="InterPro" id="IPR027417">
    <property type="entry name" value="P-loop_NTPase"/>
</dbReference>
<dbReference type="NCBIfam" id="TIGR00017">
    <property type="entry name" value="cmk"/>
    <property type="match status" value="1"/>
</dbReference>
<dbReference type="PANTHER" id="PTHR21299:SF2">
    <property type="entry name" value="CYTIDYLATE KINASE"/>
    <property type="match status" value="1"/>
</dbReference>
<dbReference type="PANTHER" id="PTHR21299">
    <property type="entry name" value="CYTIDYLATE KINASE/PANTOATE-BETA-ALANINE LIGASE"/>
    <property type="match status" value="1"/>
</dbReference>
<dbReference type="Pfam" id="PF02224">
    <property type="entry name" value="Cytidylate_kin"/>
    <property type="match status" value="1"/>
</dbReference>
<dbReference type="SUPFAM" id="SSF52540">
    <property type="entry name" value="P-loop containing nucleoside triphosphate hydrolases"/>
    <property type="match status" value="1"/>
</dbReference>
<evidence type="ECO:0000255" key="1">
    <source>
        <dbReference type="HAMAP-Rule" id="MF_00238"/>
    </source>
</evidence>
<accession>A5IT05</accession>
<reference key="1">
    <citation type="submission" date="2007-05" db="EMBL/GenBank/DDBJ databases">
        <title>Complete sequence of chromosome of Staphylococcus aureus subsp. aureus JH9.</title>
        <authorList>
            <consortium name="US DOE Joint Genome Institute"/>
            <person name="Copeland A."/>
            <person name="Lucas S."/>
            <person name="Lapidus A."/>
            <person name="Barry K."/>
            <person name="Detter J.C."/>
            <person name="Glavina del Rio T."/>
            <person name="Hammon N."/>
            <person name="Israni S."/>
            <person name="Pitluck S."/>
            <person name="Chain P."/>
            <person name="Malfatti S."/>
            <person name="Shin M."/>
            <person name="Vergez L."/>
            <person name="Schmutz J."/>
            <person name="Larimer F."/>
            <person name="Land M."/>
            <person name="Hauser L."/>
            <person name="Kyrpides N."/>
            <person name="Kim E."/>
            <person name="Tomasz A."/>
            <person name="Richardson P."/>
        </authorList>
    </citation>
    <scope>NUCLEOTIDE SEQUENCE [LARGE SCALE GENOMIC DNA]</scope>
    <source>
        <strain>JH9</strain>
    </source>
</reference>
<protein>
    <recommendedName>
        <fullName evidence="1">Cytidylate kinase</fullName>
        <shortName evidence="1">CK</shortName>
        <ecNumber evidence="1">2.7.4.25</ecNumber>
    </recommendedName>
    <alternativeName>
        <fullName evidence="1">Cytidine monophosphate kinase</fullName>
        <shortName evidence="1">CMP kinase</shortName>
    </alternativeName>
</protein>
<organism>
    <name type="scientific">Staphylococcus aureus (strain JH9)</name>
    <dbReference type="NCBI Taxonomy" id="359786"/>
    <lineage>
        <taxon>Bacteria</taxon>
        <taxon>Bacillati</taxon>
        <taxon>Bacillota</taxon>
        <taxon>Bacilli</taxon>
        <taxon>Bacillales</taxon>
        <taxon>Staphylococcaceae</taxon>
        <taxon>Staphylococcus</taxon>
    </lineage>
</organism>
<sequence length="219" mass="24595">MKAINIALDGPAAAGKSTIAKRVASELSMIYVDTGAMYRALTYKYLKLNKTEDFAKLVDQTTLDLTYKADKGQCVILDNEDVTDFLRNNDVTQHVSYVASKEPVRSFAVKKQKELAAEKGIVMDGRDIGTVVLPDADLKVYMIASVEERAERRYKDNQLRGIESNFEDLKRDIEARDQYDMNREISPLRKADDAVTLDTTGKSIEEVTDEILAMVSQIK</sequence>
<gene>
    <name evidence="1" type="primary">cmk</name>
    <name type="ordered locus">SaurJH9_1534</name>
</gene>
<proteinExistence type="inferred from homology"/>
<feature type="chain" id="PRO_1000078354" description="Cytidylate kinase">
    <location>
        <begin position="1"/>
        <end position="219"/>
    </location>
</feature>
<feature type="binding site" evidence="1">
    <location>
        <begin position="10"/>
        <end position="18"/>
    </location>
    <ligand>
        <name>ATP</name>
        <dbReference type="ChEBI" id="CHEBI:30616"/>
    </ligand>
</feature>